<evidence type="ECO:0000255" key="1">
    <source>
        <dbReference type="HAMAP-Rule" id="MF_00184"/>
    </source>
</evidence>
<evidence type="ECO:0000255" key="2">
    <source>
        <dbReference type="PROSITE-ProRule" id="PRU01228"/>
    </source>
</evidence>
<keyword id="KW-0030">Aminoacyl-tRNA synthetase</keyword>
<keyword id="KW-0067">ATP-binding</keyword>
<keyword id="KW-0963">Cytoplasm</keyword>
<keyword id="KW-0436">Ligase</keyword>
<keyword id="KW-0479">Metal-binding</keyword>
<keyword id="KW-0547">Nucleotide-binding</keyword>
<keyword id="KW-0648">Protein biosynthesis</keyword>
<keyword id="KW-1185">Reference proteome</keyword>
<keyword id="KW-0694">RNA-binding</keyword>
<keyword id="KW-0820">tRNA-binding</keyword>
<keyword id="KW-0862">Zinc</keyword>
<accession>Q5NGL8</accession>
<name>SYT_FRATT</name>
<protein>
    <recommendedName>
        <fullName evidence="1">Threonine--tRNA ligase</fullName>
        <ecNumber evidence="1">6.1.1.3</ecNumber>
    </recommendedName>
    <alternativeName>
        <fullName evidence="1">Threonyl-tRNA synthetase</fullName>
        <shortName evidence="1">ThrRS</shortName>
    </alternativeName>
</protein>
<comment type="function">
    <text evidence="1">Catalyzes the attachment of threonine to tRNA(Thr) in a two-step reaction: L-threonine is first activated by ATP to form Thr-AMP and then transferred to the acceptor end of tRNA(Thr). Also edits incorrectly charged L-seryl-tRNA(Thr).</text>
</comment>
<comment type="catalytic activity">
    <reaction evidence="1">
        <text>tRNA(Thr) + L-threonine + ATP = L-threonyl-tRNA(Thr) + AMP + diphosphate + H(+)</text>
        <dbReference type="Rhea" id="RHEA:24624"/>
        <dbReference type="Rhea" id="RHEA-COMP:9670"/>
        <dbReference type="Rhea" id="RHEA-COMP:9704"/>
        <dbReference type="ChEBI" id="CHEBI:15378"/>
        <dbReference type="ChEBI" id="CHEBI:30616"/>
        <dbReference type="ChEBI" id="CHEBI:33019"/>
        <dbReference type="ChEBI" id="CHEBI:57926"/>
        <dbReference type="ChEBI" id="CHEBI:78442"/>
        <dbReference type="ChEBI" id="CHEBI:78534"/>
        <dbReference type="ChEBI" id="CHEBI:456215"/>
        <dbReference type="EC" id="6.1.1.3"/>
    </reaction>
</comment>
<comment type="cofactor">
    <cofactor evidence="1">
        <name>Zn(2+)</name>
        <dbReference type="ChEBI" id="CHEBI:29105"/>
    </cofactor>
    <text evidence="1">Binds 1 zinc ion per subunit.</text>
</comment>
<comment type="subunit">
    <text evidence="1">Homodimer.</text>
</comment>
<comment type="subcellular location">
    <subcellularLocation>
        <location evidence="1">Cytoplasm</location>
    </subcellularLocation>
</comment>
<comment type="similarity">
    <text evidence="1">Belongs to the class-II aminoacyl-tRNA synthetase family.</text>
</comment>
<feature type="chain" id="PRO_0000100980" description="Threonine--tRNA ligase">
    <location>
        <begin position="1"/>
        <end position="634"/>
    </location>
</feature>
<feature type="domain" description="TGS" evidence="2">
    <location>
        <begin position="1"/>
        <end position="61"/>
    </location>
</feature>
<feature type="region of interest" description="Catalytic" evidence="1">
    <location>
        <begin position="241"/>
        <end position="532"/>
    </location>
</feature>
<feature type="binding site" evidence="1">
    <location>
        <position position="332"/>
    </location>
    <ligand>
        <name>Zn(2+)</name>
        <dbReference type="ChEBI" id="CHEBI:29105"/>
    </ligand>
</feature>
<feature type="binding site" evidence="1">
    <location>
        <position position="383"/>
    </location>
    <ligand>
        <name>Zn(2+)</name>
        <dbReference type="ChEBI" id="CHEBI:29105"/>
    </ligand>
</feature>
<feature type="binding site" evidence="1">
    <location>
        <position position="509"/>
    </location>
    <ligand>
        <name>Zn(2+)</name>
        <dbReference type="ChEBI" id="CHEBI:29105"/>
    </ligand>
</feature>
<sequence length="634" mass="72390">MINIRFPDGSIREFEAGVNSLDVAKSISPSLAKATMAAYIDDQLKDAKDAINSNCELRLITVKDPEGLEILRHSCAHLLAHAVKELYPNTEVTIGPVVDNGFYYDFSFKESIGEADLPTIEKKMKELAKKSAPISYRVVPKAEAIEFFKAQGENYKVEIIDSIADEQMKIYTQDNFSDLCRGPHIPNTSVLKAFKLTKLAGAYWRGNSDNEMLTRIYGTCWATKEDLEQYLNMLEEAEKRDHRKIGKVLDLFHFQEDSPGIAFWHDNGVRIWRQVEDYMRASNNKYGCSEIRTPLIADFSLWQKSGHASKYAENMFATKSENRDFAIRPMNCPTCVQVYNTKLHSYRDLPIRMAEFGIVHRNEPSGSLHGLLRVRSFTQDDGHIFCTPEQVEEEVILMVQQCFEVYKDFGFNDFAVKIALRPENRIGDDETWDKSEQMLKNALDANNVSYELLPGEGAFYGPKIEFHLKDAIGRSWQCGTIQLDFSMPQRLGATYIDKNGEKQVPVMLHRAIVGSLERFIGMLIEHYAGNLPLWLAPVQVAVMGISNNQDDYCKEVFIMLEKNGIRAKLDLRNEKIGFKIREHTLLRVPYLVILGKNEQEQKIITIRKHSGEDLGQMSVDDFCAFLDKQIQAKE</sequence>
<organism>
    <name type="scientific">Francisella tularensis subsp. tularensis (strain SCHU S4 / Schu 4)</name>
    <dbReference type="NCBI Taxonomy" id="177416"/>
    <lineage>
        <taxon>Bacteria</taxon>
        <taxon>Pseudomonadati</taxon>
        <taxon>Pseudomonadota</taxon>
        <taxon>Gammaproteobacteria</taxon>
        <taxon>Thiotrichales</taxon>
        <taxon>Francisellaceae</taxon>
        <taxon>Francisella</taxon>
    </lineage>
</organism>
<proteinExistence type="inferred from homology"/>
<reference key="1">
    <citation type="journal article" date="2005" name="Nat. Genet.">
        <title>The complete genome sequence of Francisella tularensis, the causative agent of tularemia.</title>
        <authorList>
            <person name="Larsson P."/>
            <person name="Oyston P.C.F."/>
            <person name="Chain P."/>
            <person name="Chu M.C."/>
            <person name="Duffield M."/>
            <person name="Fuxelius H.-H."/>
            <person name="Garcia E."/>
            <person name="Haelltorp G."/>
            <person name="Johansson D."/>
            <person name="Isherwood K.E."/>
            <person name="Karp P.D."/>
            <person name="Larsson E."/>
            <person name="Liu Y."/>
            <person name="Michell S."/>
            <person name="Prior J."/>
            <person name="Prior R."/>
            <person name="Malfatti S."/>
            <person name="Sjoestedt A."/>
            <person name="Svensson K."/>
            <person name="Thompson N."/>
            <person name="Vergez L."/>
            <person name="Wagg J.K."/>
            <person name="Wren B.W."/>
            <person name="Lindler L.E."/>
            <person name="Andersson S.G.E."/>
            <person name="Forsman M."/>
            <person name="Titball R.W."/>
        </authorList>
    </citation>
    <scope>NUCLEOTIDE SEQUENCE [LARGE SCALE GENOMIC DNA]</scope>
    <source>
        <strain>SCHU S4 / Schu 4</strain>
    </source>
</reference>
<dbReference type="EC" id="6.1.1.3" evidence="1"/>
<dbReference type="EMBL" id="AJ749949">
    <property type="protein sequence ID" value="CAG45450.1"/>
    <property type="molecule type" value="Genomic_DNA"/>
</dbReference>
<dbReference type="RefSeq" id="WP_003020750.1">
    <property type="nucleotide sequence ID" value="NC_006570.2"/>
</dbReference>
<dbReference type="RefSeq" id="YP_169824.1">
    <property type="nucleotide sequence ID" value="NC_006570.2"/>
</dbReference>
<dbReference type="SMR" id="Q5NGL8"/>
<dbReference type="IntAct" id="Q5NGL8">
    <property type="interactions" value="3"/>
</dbReference>
<dbReference type="STRING" id="177416.FTT_0817"/>
<dbReference type="DNASU" id="3190763"/>
<dbReference type="EnsemblBacteria" id="CAG45450">
    <property type="protein sequence ID" value="CAG45450"/>
    <property type="gene ID" value="FTT_0817"/>
</dbReference>
<dbReference type="KEGG" id="ftu:FTT_0817"/>
<dbReference type="eggNOG" id="COG0441">
    <property type="taxonomic scope" value="Bacteria"/>
</dbReference>
<dbReference type="OrthoDB" id="9802304at2"/>
<dbReference type="Proteomes" id="UP000001174">
    <property type="component" value="Chromosome"/>
</dbReference>
<dbReference type="GO" id="GO:0005737">
    <property type="term" value="C:cytoplasm"/>
    <property type="evidence" value="ECO:0007669"/>
    <property type="project" value="UniProtKB-SubCell"/>
</dbReference>
<dbReference type="GO" id="GO:0005524">
    <property type="term" value="F:ATP binding"/>
    <property type="evidence" value="ECO:0007669"/>
    <property type="project" value="UniProtKB-UniRule"/>
</dbReference>
<dbReference type="GO" id="GO:0046872">
    <property type="term" value="F:metal ion binding"/>
    <property type="evidence" value="ECO:0007669"/>
    <property type="project" value="UniProtKB-KW"/>
</dbReference>
<dbReference type="GO" id="GO:0004829">
    <property type="term" value="F:threonine-tRNA ligase activity"/>
    <property type="evidence" value="ECO:0007669"/>
    <property type="project" value="UniProtKB-UniRule"/>
</dbReference>
<dbReference type="GO" id="GO:0000049">
    <property type="term" value="F:tRNA binding"/>
    <property type="evidence" value="ECO:0007669"/>
    <property type="project" value="UniProtKB-KW"/>
</dbReference>
<dbReference type="GO" id="GO:0006435">
    <property type="term" value="P:threonyl-tRNA aminoacylation"/>
    <property type="evidence" value="ECO:0007669"/>
    <property type="project" value="UniProtKB-UniRule"/>
</dbReference>
<dbReference type="CDD" id="cd01667">
    <property type="entry name" value="TGS_ThrRS"/>
    <property type="match status" value="1"/>
</dbReference>
<dbReference type="CDD" id="cd00860">
    <property type="entry name" value="ThrRS_anticodon"/>
    <property type="match status" value="1"/>
</dbReference>
<dbReference type="CDD" id="cd00771">
    <property type="entry name" value="ThrRS_core"/>
    <property type="match status" value="1"/>
</dbReference>
<dbReference type="FunFam" id="3.10.20.30:FF:000005">
    <property type="entry name" value="Threonine--tRNA ligase"/>
    <property type="match status" value="1"/>
</dbReference>
<dbReference type="FunFam" id="3.30.54.20:FF:000002">
    <property type="entry name" value="Threonine--tRNA ligase"/>
    <property type="match status" value="1"/>
</dbReference>
<dbReference type="FunFam" id="3.30.930.10:FF:000002">
    <property type="entry name" value="Threonine--tRNA ligase"/>
    <property type="match status" value="1"/>
</dbReference>
<dbReference type="FunFam" id="3.40.50.800:FF:000001">
    <property type="entry name" value="Threonine--tRNA ligase"/>
    <property type="match status" value="1"/>
</dbReference>
<dbReference type="FunFam" id="3.30.980.10:FF:000005">
    <property type="entry name" value="Threonyl-tRNA synthetase, mitochondrial"/>
    <property type="match status" value="1"/>
</dbReference>
<dbReference type="Gene3D" id="3.10.20.30">
    <property type="match status" value="1"/>
</dbReference>
<dbReference type="Gene3D" id="3.30.54.20">
    <property type="match status" value="1"/>
</dbReference>
<dbReference type="Gene3D" id="3.40.50.800">
    <property type="entry name" value="Anticodon-binding domain"/>
    <property type="match status" value="1"/>
</dbReference>
<dbReference type="Gene3D" id="3.30.930.10">
    <property type="entry name" value="Bira Bifunctional Protein, Domain 2"/>
    <property type="match status" value="1"/>
</dbReference>
<dbReference type="Gene3D" id="3.30.980.10">
    <property type="entry name" value="Threonyl-trna Synthetase, Chain A, domain 2"/>
    <property type="match status" value="1"/>
</dbReference>
<dbReference type="HAMAP" id="MF_00184">
    <property type="entry name" value="Thr_tRNA_synth"/>
    <property type="match status" value="1"/>
</dbReference>
<dbReference type="InterPro" id="IPR002314">
    <property type="entry name" value="aa-tRNA-synt_IIb"/>
</dbReference>
<dbReference type="InterPro" id="IPR006195">
    <property type="entry name" value="aa-tRNA-synth_II"/>
</dbReference>
<dbReference type="InterPro" id="IPR045864">
    <property type="entry name" value="aa-tRNA-synth_II/BPL/LPL"/>
</dbReference>
<dbReference type="InterPro" id="IPR004154">
    <property type="entry name" value="Anticodon-bd"/>
</dbReference>
<dbReference type="InterPro" id="IPR036621">
    <property type="entry name" value="Anticodon-bd_dom_sf"/>
</dbReference>
<dbReference type="InterPro" id="IPR012675">
    <property type="entry name" value="Beta-grasp_dom_sf"/>
</dbReference>
<dbReference type="InterPro" id="IPR004095">
    <property type="entry name" value="TGS"/>
</dbReference>
<dbReference type="InterPro" id="IPR012676">
    <property type="entry name" value="TGS-like"/>
</dbReference>
<dbReference type="InterPro" id="IPR002320">
    <property type="entry name" value="Thr-tRNA-ligase_IIa"/>
</dbReference>
<dbReference type="InterPro" id="IPR018163">
    <property type="entry name" value="Thr/Ala-tRNA-synth_IIc_edit"/>
</dbReference>
<dbReference type="InterPro" id="IPR047246">
    <property type="entry name" value="ThrRS_anticodon"/>
</dbReference>
<dbReference type="InterPro" id="IPR033728">
    <property type="entry name" value="ThrRS_core"/>
</dbReference>
<dbReference type="InterPro" id="IPR012947">
    <property type="entry name" value="tRNA_SAD"/>
</dbReference>
<dbReference type="NCBIfam" id="TIGR00418">
    <property type="entry name" value="thrS"/>
    <property type="match status" value="1"/>
</dbReference>
<dbReference type="PANTHER" id="PTHR11451:SF44">
    <property type="entry name" value="THREONINE--TRNA LIGASE, CHLOROPLASTIC_MITOCHONDRIAL 2"/>
    <property type="match status" value="1"/>
</dbReference>
<dbReference type="PANTHER" id="PTHR11451">
    <property type="entry name" value="THREONINE-TRNA LIGASE"/>
    <property type="match status" value="1"/>
</dbReference>
<dbReference type="Pfam" id="PF03129">
    <property type="entry name" value="HGTP_anticodon"/>
    <property type="match status" value="1"/>
</dbReference>
<dbReference type="Pfam" id="PF02824">
    <property type="entry name" value="TGS"/>
    <property type="match status" value="1"/>
</dbReference>
<dbReference type="Pfam" id="PF00587">
    <property type="entry name" value="tRNA-synt_2b"/>
    <property type="match status" value="1"/>
</dbReference>
<dbReference type="Pfam" id="PF07973">
    <property type="entry name" value="tRNA_SAD"/>
    <property type="match status" value="1"/>
</dbReference>
<dbReference type="PRINTS" id="PR01047">
    <property type="entry name" value="TRNASYNTHTHR"/>
</dbReference>
<dbReference type="SMART" id="SM00863">
    <property type="entry name" value="tRNA_SAD"/>
    <property type="match status" value="1"/>
</dbReference>
<dbReference type="SUPFAM" id="SSF52954">
    <property type="entry name" value="Class II aaRS ABD-related"/>
    <property type="match status" value="1"/>
</dbReference>
<dbReference type="SUPFAM" id="SSF55681">
    <property type="entry name" value="Class II aaRS and biotin synthetases"/>
    <property type="match status" value="1"/>
</dbReference>
<dbReference type="SUPFAM" id="SSF81271">
    <property type="entry name" value="TGS-like"/>
    <property type="match status" value="1"/>
</dbReference>
<dbReference type="SUPFAM" id="SSF55186">
    <property type="entry name" value="ThrRS/AlaRS common domain"/>
    <property type="match status" value="1"/>
</dbReference>
<dbReference type="PROSITE" id="PS50862">
    <property type="entry name" value="AA_TRNA_LIGASE_II"/>
    <property type="match status" value="1"/>
</dbReference>
<dbReference type="PROSITE" id="PS51880">
    <property type="entry name" value="TGS"/>
    <property type="match status" value="1"/>
</dbReference>
<gene>
    <name evidence="1" type="primary">thrS</name>
    <name type="ordered locus">FTT_0817</name>
</gene>